<reference key="1">
    <citation type="journal article" date="2008" name="Genomics">
        <title>Evolution in the laboratory: the genome of Halobacterium salinarum strain R1 compared to that of strain NRC-1.</title>
        <authorList>
            <person name="Pfeiffer F."/>
            <person name="Schuster S.C."/>
            <person name="Broicher A."/>
            <person name="Falb M."/>
            <person name="Palm P."/>
            <person name="Rodewald K."/>
            <person name="Ruepp A."/>
            <person name="Soppa J."/>
            <person name="Tittor J."/>
            <person name="Oesterhelt D."/>
        </authorList>
    </citation>
    <scope>NUCLEOTIDE SEQUENCE [LARGE SCALE GENOMIC DNA]</scope>
    <source>
        <strain>ATCC 29341 / DSM 671 / R1</strain>
    </source>
</reference>
<gene>
    <name type="primary">eIF1A</name>
    <name type="ordered locus">OE_4136R</name>
</gene>
<proteinExistence type="inferred from homology"/>
<keyword id="KW-0396">Initiation factor</keyword>
<keyword id="KW-0648">Protein biosynthesis</keyword>
<name>IF1A_HALS3</name>
<comment type="function">
    <text evidence="1">Seems to be required for maximal rate of protein biosynthesis. Enhances ribosome dissociation into subunits and stabilizes the binding of the initiator Met-tRNA(I) to 40 S ribosomal subunits.</text>
</comment>
<comment type="similarity">
    <text evidence="1">Belongs to the eIF-1A family.</text>
</comment>
<sequence>MSDDGGGRKNLRMPEDDEVFAEVTDMLGANRVQVRCADGEERTARIPGRMQKRIWIREDDIVLVEPWDWQDDKADVTWRYEKSDADQLREEGHIE</sequence>
<accession>B0R7D8</accession>
<organism>
    <name type="scientific">Halobacterium salinarum (strain ATCC 29341 / DSM 671 / R1)</name>
    <dbReference type="NCBI Taxonomy" id="478009"/>
    <lineage>
        <taxon>Archaea</taxon>
        <taxon>Methanobacteriati</taxon>
        <taxon>Methanobacteriota</taxon>
        <taxon>Stenosarchaea group</taxon>
        <taxon>Halobacteria</taxon>
        <taxon>Halobacteriales</taxon>
        <taxon>Halobacteriaceae</taxon>
        <taxon>Halobacterium</taxon>
        <taxon>Halobacterium salinarum NRC-34001</taxon>
    </lineage>
</organism>
<feature type="chain" id="PRO_1000099963" description="Translation initiation factor 1A">
    <location>
        <begin position="1"/>
        <end position="95"/>
    </location>
</feature>
<feature type="domain" description="S1-like" evidence="1">
    <location>
        <begin position="7"/>
        <end position="81"/>
    </location>
</feature>
<evidence type="ECO:0000255" key="1">
    <source>
        <dbReference type="HAMAP-Rule" id="MF_00216"/>
    </source>
</evidence>
<protein>
    <recommendedName>
        <fullName evidence="1">Translation initiation factor 1A</fullName>
        <shortName evidence="1">aIF-1A</shortName>
    </recommendedName>
</protein>
<dbReference type="EMBL" id="AM774415">
    <property type="protein sequence ID" value="CAP14657.1"/>
    <property type="molecule type" value="Genomic_DNA"/>
</dbReference>
<dbReference type="RefSeq" id="WP_010903658.1">
    <property type="nucleotide sequence ID" value="NC_010364.1"/>
</dbReference>
<dbReference type="SMR" id="B0R7D8"/>
<dbReference type="EnsemblBacteria" id="CAP14657">
    <property type="protein sequence ID" value="CAP14657"/>
    <property type="gene ID" value="OE_4136R"/>
</dbReference>
<dbReference type="GeneID" id="89350379"/>
<dbReference type="KEGG" id="hsl:OE_4136R"/>
<dbReference type="HOGENOM" id="CLU_109098_1_2_2"/>
<dbReference type="PhylomeDB" id="B0R7D8"/>
<dbReference type="Proteomes" id="UP000001321">
    <property type="component" value="Chromosome"/>
</dbReference>
<dbReference type="GO" id="GO:0003723">
    <property type="term" value="F:RNA binding"/>
    <property type="evidence" value="ECO:0007669"/>
    <property type="project" value="InterPro"/>
</dbReference>
<dbReference type="GO" id="GO:0003743">
    <property type="term" value="F:translation initiation factor activity"/>
    <property type="evidence" value="ECO:0007669"/>
    <property type="project" value="UniProtKB-UniRule"/>
</dbReference>
<dbReference type="CDD" id="cd05793">
    <property type="entry name" value="S1_IF1A"/>
    <property type="match status" value="1"/>
</dbReference>
<dbReference type="Gene3D" id="2.40.50.140">
    <property type="entry name" value="Nucleic acid-binding proteins"/>
    <property type="match status" value="1"/>
</dbReference>
<dbReference type="HAMAP" id="MF_00216">
    <property type="entry name" value="aIF_1A"/>
    <property type="match status" value="1"/>
</dbReference>
<dbReference type="InterPro" id="IPR012340">
    <property type="entry name" value="NA-bd_OB-fold"/>
</dbReference>
<dbReference type="InterPro" id="IPR006196">
    <property type="entry name" value="RNA-binding_domain_S1_IF1"/>
</dbReference>
<dbReference type="InterPro" id="IPR001253">
    <property type="entry name" value="TIF_eIF-1A"/>
</dbReference>
<dbReference type="InterPro" id="IPR018104">
    <property type="entry name" value="TIF_eIF-1A_CS"/>
</dbReference>
<dbReference type="NCBIfam" id="TIGR00523">
    <property type="entry name" value="eIF-1A"/>
    <property type="match status" value="1"/>
</dbReference>
<dbReference type="NCBIfam" id="NF003082">
    <property type="entry name" value="PRK04012.1-1"/>
    <property type="match status" value="1"/>
</dbReference>
<dbReference type="NCBIfam" id="NF003083">
    <property type="entry name" value="PRK04012.1-2"/>
    <property type="match status" value="1"/>
</dbReference>
<dbReference type="NCBIfam" id="NF003084">
    <property type="entry name" value="PRK04012.1-3"/>
    <property type="match status" value="1"/>
</dbReference>
<dbReference type="NCBIfam" id="NF003085">
    <property type="entry name" value="PRK04012.1-5"/>
    <property type="match status" value="1"/>
</dbReference>
<dbReference type="PANTHER" id="PTHR21668">
    <property type="entry name" value="EIF-1A"/>
    <property type="match status" value="1"/>
</dbReference>
<dbReference type="Pfam" id="PF01176">
    <property type="entry name" value="eIF-1a"/>
    <property type="match status" value="1"/>
</dbReference>
<dbReference type="SMART" id="SM00652">
    <property type="entry name" value="eIF1a"/>
    <property type="match status" value="1"/>
</dbReference>
<dbReference type="SUPFAM" id="SSF50249">
    <property type="entry name" value="Nucleic acid-binding proteins"/>
    <property type="match status" value="1"/>
</dbReference>
<dbReference type="PROSITE" id="PS01262">
    <property type="entry name" value="IF1A"/>
    <property type="match status" value="1"/>
</dbReference>
<dbReference type="PROSITE" id="PS50832">
    <property type="entry name" value="S1_IF1_TYPE"/>
    <property type="match status" value="1"/>
</dbReference>